<comment type="function">
    <text evidence="1">An essential GTPase which binds GTP, GDP and possibly (p)ppGpp with moderate affinity, with high nucleotide exchange rates and a fairly low GTP hydrolysis rate. Plays a role in control of the cell cycle, stress response, ribosome biogenesis and in those bacteria that undergo differentiation, in morphogenesis control.</text>
</comment>
<comment type="cofactor">
    <cofactor evidence="1">
        <name>Mg(2+)</name>
        <dbReference type="ChEBI" id="CHEBI:18420"/>
    </cofactor>
</comment>
<comment type="subunit">
    <text evidence="1">Monomer.</text>
</comment>
<comment type="subcellular location">
    <subcellularLocation>
        <location evidence="1">Cytoplasm</location>
    </subcellularLocation>
</comment>
<comment type="similarity">
    <text evidence="1">Belongs to the TRAFAC class OBG-HflX-like GTPase superfamily. OBG GTPase family.</text>
</comment>
<evidence type="ECO:0000255" key="1">
    <source>
        <dbReference type="HAMAP-Rule" id="MF_01454"/>
    </source>
</evidence>
<evidence type="ECO:0000255" key="2">
    <source>
        <dbReference type="PROSITE-ProRule" id="PRU01231"/>
    </source>
</evidence>
<evidence type="ECO:0000256" key="3">
    <source>
        <dbReference type="SAM" id="MobiDB-lite"/>
    </source>
</evidence>
<proteinExistence type="inferred from homology"/>
<feature type="chain" id="PRO_0000205434" description="GTPase Obg">
    <location>
        <begin position="1"/>
        <end position="390"/>
    </location>
</feature>
<feature type="domain" description="Obg" evidence="2">
    <location>
        <begin position="1"/>
        <end position="159"/>
    </location>
</feature>
<feature type="domain" description="OBG-type G" evidence="1">
    <location>
        <begin position="160"/>
        <end position="333"/>
    </location>
</feature>
<feature type="region of interest" description="Disordered" evidence="3">
    <location>
        <begin position="363"/>
        <end position="382"/>
    </location>
</feature>
<feature type="compositionally biased region" description="Acidic residues" evidence="3">
    <location>
        <begin position="366"/>
        <end position="382"/>
    </location>
</feature>
<feature type="binding site" evidence="1">
    <location>
        <begin position="166"/>
        <end position="173"/>
    </location>
    <ligand>
        <name>GTP</name>
        <dbReference type="ChEBI" id="CHEBI:37565"/>
    </ligand>
</feature>
<feature type="binding site" evidence="1">
    <location>
        <position position="173"/>
    </location>
    <ligand>
        <name>Mg(2+)</name>
        <dbReference type="ChEBI" id="CHEBI:18420"/>
    </ligand>
</feature>
<feature type="binding site" evidence="1">
    <location>
        <begin position="191"/>
        <end position="195"/>
    </location>
    <ligand>
        <name>GTP</name>
        <dbReference type="ChEBI" id="CHEBI:37565"/>
    </ligand>
</feature>
<feature type="binding site" evidence="1">
    <location>
        <position position="193"/>
    </location>
    <ligand>
        <name>Mg(2+)</name>
        <dbReference type="ChEBI" id="CHEBI:18420"/>
    </ligand>
</feature>
<feature type="binding site" evidence="1">
    <location>
        <begin position="213"/>
        <end position="216"/>
    </location>
    <ligand>
        <name>GTP</name>
        <dbReference type="ChEBI" id="CHEBI:37565"/>
    </ligand>
</feature>
<feature type="binding site" evidence="1">
    <location>
        <begin position="283"/>
        <end position="286"/>
    </location>
    <ligand>
        <name>GTP</name>
        <dbReference type="ChEBI" id="CHEBI:37565"/>
    </ligand>
</feature>
<feature type="binding site" evidence="1">
    <location>
        <begin position="314"/>
        <end position="316"/>
    </location>
    <ligand>
        <name>GTP</name>
        <dbReference type="ChEBI" id="CHEBI:37565"/>
    </ligand>
</feature>
<sequence length="390" mass="43377">MKFIDESLIRIEAGDGGNGCVSFRREKFIPKGGPDGGDGGDGGDVYLQADENLNTLIDYRFNKRFAAERGENGRSSDCTGRRGKDIILPVPVGTRAIDNDTKETLGDLTQHGQKMLVAKGGYHGLGNTRFKSSVNRAPRQKTMGTPGEKRDLLLELMLLADVGMLGLPNAGKSTFIRAVSAAKPKVADYPFTTLVPSLGVVKVDDSHSFVVADIPGLIEGAADGAGLGIRFLKHLERCRVLIHLVDIAPIDGSNPADNMAIIESELFQYSEKLSEKPRWLVFNKIDTMSDEEAEERAREIAEQLGWEEDYYFISAATGKNVSPLCRDIMDFIIANPREAETQQVAPEEVKFKWEDYHQERLAEHQFDDDEDWDDDWSEEDDEGIEFIYKP</sequence>
<protein>
    <recommendedName>
        <fullName evidence="1">GTPase Obg</fullName>
        <ecNumber evidence="1">3.6.5.-</ecNumber>
    </recommendedName>
    <alternativeName>
        <fullName evidence="1">GTP-binding protein Obg</fullName>
    </alternativeName>
</protein>
<gene>
    <name evidence="1" type="primary">obg</name>
    <name type="ordered locus">HI_0877</name>
</gene>
<accession>P44915</accession>
<dbReference type="EC" id="3.6.5.-" evidence="1"/>
<dbReference type="EMBL" id="L42023">
    <property type="protein sequence ID" value="AAC22533.1"/>
    <property type="molecule type" value="Genomic_DNA"/>
</dbReference>
<dbReference type="PIR" id="E64099">
    <property type="entry name" value="E64099"/>
</dbReference>
<dbReference type="RefSeq" id="NP_439038.1">
    <property type="nucleotide sequence ID" value="NC_000907.1"/>
</dbReference>
<dbReference type="SMR" id="P44915"/>
<dbReference type="STRING" id="71421.HI_0877"/>
<dbReference type="EnsemblBacteria" id="AAC22533">
    <property type="protein sequence ID" value="AAC22533"/>
    <property type="gene ID" value="HI_0877"/>
</dbReference>
<dbReference type="KEGG" id="hin:HI_0877"/>
<dbReference type="PATRIC" id="fig|71421.8.peg.919"/>
<dbReference type="eggNOG" id="COG0536">
    <property type="taxonomic scope" value="Bacteria"/>
</dbReference>
<dbReference type="HOGENOM" id="CLU_011747_2_0_6"/>
<dbReference type="OrthoDB" id="9807318at2"/>
<dbReference type="PhylomeDB" id="P44915"/>
<dbReference type="BioCyc" id="HINF71421:G1GJ1-917-MONOMER"/>
<dbReference type="Proteomes" id="UP000000579">
    <property type="component" value="Chromosome"/>
</dbReference>
<dbReference type="GO" id="GO:0005737">
    <property type="term" value="C:cytoplasm"/>
    <property type="evidence" value="ECO:0007669"/>
    <property type="project" value="UniProtKB-SubCell"/>
</dbReference>
<dbReference type="GO" id="GO:0005525">
    <property type="term" value="F:GTP binding"/>
    <property type="evidence" value="ECO:0000318"/>
    <property type="project" value="GO_Central"/>
</dbReference>
<dbReference type="GO" id="GO:0003924">
    <property type="term" value="F:GTPase activity"/>
    <property type="evidence" value="ECO:0000318"/>
    <property type="project" value="GO_Central"/>
</dbReference>
<dbReference type="GO" id="GO:0000287">
    <property type="term" value="F:magnesium ion binding"/>
    <property type="evidence" value="ECO:0007669"/>
    <property type="project" value="InterPro"/>
</dbReference>
<dbReference type="GO" id="GO:0042254">
    <property type="term" value="P:ribosome biogenesis"/>
    <property type="evidence" value="ECO:0007669"/>
    <property type="project" value="UniProtKB-UniRule"/>
</dbReference>
<dbReference type="CDD" id="cd01898">
    <property type="entry name" value="Obg"/>
    <property type="match status" value="1"/>
</dbReference>
<dbReference type="FunFam" id="2.70.210.12:FF:000001">
    <property type="entry name" value="GTPase Obg"/>
    <property type="match status" value="1"/>
</dbReference>
<dbReference type="FunFam" id="3.40.50.300:FF:000185">
    <property type="entry name" value="GTPase Obg"/>
    <property type="match status" value="1"/>
</dbReference>
<dbReference type="Gene3D" id="2.70.210.12">
    <property type="entry name" value="GTP1/OBG domain"/>
    <property type="match status" value="1"/>
</dbReference>
<dbReference type="Gene3D" id="3.40.50.300">
    <property type="entry name" value="P-loop containing nucleotide triphosphate hydrolases"/>
    <property type="match status" value="1"/>
</dbReference>
<dbReference type="HAMAP" id="MF_01454">
    <property type="entry name" value="GTPase_Obg"/>
    <property type="match status" value="1"/>
</dbReference>
<dbReference type="InterPro" id="IPR031167">
    <property type="entry name" value="G_OBG"/>
</dbReference>
<dbReference type="InterPro" id="IPR006073">
    <property type="entry name" value="GTP-bd"/>
</dbReference>
<dbReference type="InterPro" id="IPR014100">
    <property type="entry name" value="GTP-bd_Obg/CgtA"/>
</dbReference>
<dbReference type="InterPro" id="IPR006074">
    <property type="entry name" value="GTP1-OBG_CS"/>
</dbReference>
<dbReference type="InterPro" id="IPR006169">
    <property type="entry name" value="GTP1_OBG_dom"/>
</dbReference>
<dbReference type="InterPro" id="IPR036726">
    <property type="entry name" value="GTP1_OBG_dom_sf"/>
</dbReference>
<dbReference type="InterPro" id="IPR045086">
    <property type="entry name" value="OBG_GTPase"/>
</dbReference>
<dbReference type="InterPro" id="IPR027417">
    <property type="entry name" value="P-loop_NTPase"/>
</dbReference>
<dbReference type="NCBIfam" id="TIGR02729">
    <property type="entry name" value="Obg_CgtA"/>
    <property type="match status" value="1"/>
</dbReference>
<dbReference type="NCBIfam" id="NF008955">
    <property type="entry name" value="PRK12297.1"/>
    <property type="match status" value="1"/>
</dbReference>
<dbReference type="NCBIfam" id="NF008956">
    <property type="entry name" value="PRK12299.1"/>
    <property type="match status" value="1"/>
</dbReference>
<dbReference type="PANTHER" id="PTHR11702">
    <property type="entry name" value="DEVELOPMENTALLY REGULATED GTP-BINDING PROTEIN-RELATED"/>
    <property type="match status" value="1"/>
</dbReference>
<dbReference type="PANTHER" id="PTHR11702:SF31">
    <property type="entry name" value="MITOCHONDRIAL RIBOSOME-ASSOCIATED GTPASE 2"/>
    <property type="match status" value="1"/>
</dbReference>
<dbReference type="Pfam" id="PF01018">
    <property type="entry name" value="GTP1_OBG"/>
    <property type="match status" value="1"/>
</dbReference>
<dbReference type="Pfam" id="PF01926">
    <property type="entry name" value="MMR_HSR1"/>
    <property type="match status" value="1"/>
</dbReference>
<dbReference type="PIRSF" id="PIRSF002401">
    <property type="entry name" value="GTP_bd_Obg/CgtA"/>
    <property type="match status" value="1"/>
</dbReference>
<dbReference type="PRINTS" id="PR00326">
    <property type="entry name" value="GTP1OBG"/>
</dbReference>
<dbReference type="SUPFAM" id="SSF82051">
    <property type="entry name" value="Obg GTP-binding protein N-terminal domain"/>
    <property type="match status" value="1"/>
</dbReference>
<dbReference type="SUPFAM" id="SSF52540">
    <property type="entry name" value="P-loop containing nucleoside triphosphate hydrolases"/>
    <property type="match status" value="1"/>
</dbReference>
<dbReference type="PROSITE" id="PS51710">
    <property type="entry name" value="G_OBG"/>
    <property type="match status" value="1"/>
</dbReference>
<dbReference type="PROSITE" id="PS00905">
    <property type="entry name" value="GTP1_OBG"/>
    <property type="match status" value="1"/>
</dbReference>
<dbReference type="PROSITE" id="PS51883">
    <property type="entry name" value="OBG"/>
    <property type="match status" value="1"/>
</dbReference>
<keyword id="KW-0963">Cytoplasm</keyword>
<keyword id="KW-0342">GTP-binding</keyword>
<keyword id="KW-0378">Hydrolase</keyword>
<keyword id="KW-0460">Magnesium</keyword>
<keyword id="KW-0479">Metal-binding</keyword>
<keyword id="KW-0547">Nucleotide-binding</keyword>
<keyword id="KW-1185">Reference proteome</keyword>
<organism>
    <name type="scientific">Haemophilus influenzae (strain ATCC 51907 / DSM 11121 / KW20 / Rd)</name>
    <dbReference type="NCBI Taxonomy" id="71421"/>
    <lineage>
        <taxon>Bacteria</taxon>
        <taxon>Pseudomonadati</taxon>
        <taxon>Pseudomonadota</taxon>
        <taxon>Gammaproteobacteria</taxon>
        <taxon>Pasteurellales</taxon>
        <taxon>Pasteurellaceae</taxon>
        <taxon>Haemophilus</taxon>
    </lineage>
</organism>
<name>OBG_HAEIN</name>
<reference key="1">
    <citation type="journal article" date="1995" name="Science">
        <title>Whole-genome random sequencing and assembly of Haemophilus influenzae Rd.</title>
        <authorList>
            <person name="Fleischmann R.D."/>
            <person name="Adams M.D."/>
            <person name="White O."/>
            <person name="Clayton R.A."/>
            <person name="Kirkness E.F."/>
            <person name="Kerlavage A.R."/>
            <person name="Bult C.J."/>
            <person name="Tomb J.-F."/>
            <person name="Dougherty B.A."/>
            <person name="Merrick J.M."/>
            <person name="McKenney K."/>
            <person name="Sutton G.G."/>
            <person name="FitzHugh W."/>
            <person name="Fields C.A."/>
            <person name="Gocayne J.D."/>
            <person name="Scott J.D."/>
            <person name="Shirley R."/>
            <person name="Liu L.-I."/>
            <person name="Glodek A."/>
            <person name="Kelley J.M."/>
            <person name="Weidman J.F."/>
            <person name="Phillips C.A."/>
            <person name="Spriggs T."/>
            <person name="Hedblom E."/>
            <person name="Cotton M.D."/>
            <person name="Utterback T.R."/>
            <person name="Hanna M.C."/>
            <person name="Nguyen D.T."/>
            <person name="Saudek D.M."/>
            <person name="Brandon R.C."/>
            <person name="Fine L.D."/>
            <person name="Fritchman J.L."/>
            <person name="Fuhrmann J.L."/>
            <person name="Geoghagen N.S.M."/>
            <person name="Gnehm C.L."/>
            <person name="McDonald L.A."/>
            <person name="Small K.V."/>
            <person name="Fraser C.M."/>
            <person name="Smith H.O."/>
            <person name="Venter J.C."/>
        </authorList>
    </citation>
    <scope>NUCLEOTIDE SEQUENCE [LARGE SCALE GENOMIC DNA]</scope>
    <source>
        <strain>ATCC 51907 / DSM 11121 / KW20 / Rd</strain>
    </source>
</reference>